<comment type="function">
    <text evidence="4 5">Involved in both the tricarboxylic acid (TCA) and methylcitric acid cycles (PubMed:28956599). Has both 2-methylcitrate synthase and citrate synthase activities. Catalyzes the condensation of propionyl-CoA and oxaloacetate to yield 2-methylcitrate (2-MC) and CoA, and the condensation of acetyl-CoA and oxaloacetate to yield citrate and CoA (PubMed:28956599, PubMed:8759838). Has 2.3-fold higher activity as a 2-methylcitrate synthase (PubMed:28956599). Catalyzes the formation of either (2S,3R)- or (2R,3S)-2-methylcitrate (PubMed:28956599).</text>
</comment>
<comment type="catalytic activity">
    <reaction evidence="4">
        <text>propanoyl-CoA + oxaloacetate + H2O = 2-methylcitrate + CoA + H(+)</text>
        <dbReference type="Rhea" id="RHEA:57492"/>
        <dbReference type="ChEBI" id="CHEBI:15377"/>
        <dbReference type="ChEBI" id="CHEBI:15378"/>
        <dbReference type="ChEBI" id="CHEBI:15598"/>
        <dbReference type="ChEBI" id="CHEBI:16452"/>
        <dbReference type="ChEBI" id="CHEBI:57287"/>
        <dbReference type="ChEBI" id="CHEBI:57392"/>
    </reaction>
</comment>
<comment type="catalytic activity">
    <reaction evidence="4">
        <text>oxaloacetate + acetyl-CoA + H2O = citrate + CoA + H(+)</text>
        <dbReference type="Rhea" id="RHEA:16845"/>
        <dbReference type="ChEBI" id="CHEBI:15377"/>
        <dbReference type="ChEBI" id="CHEBI:15378"/>
        <dbReference type="ChEBI" id="CHEBI:16452"/>
        <dbReference type="ChEBI" id="CHEBI:16947"/>
        <dbReference type="ChEBI" id="CHEBI:57287"/>
        <dbReference type="ChEBI" id="CHEBI:57288"/>
        <dbReference type="EC" id="2.3.3.16"/>
    </reaction>
</comment>
<comment type="pathway">
    <text evidence="9">Carbohydrate metabolism; tricarboxylic acid cycle; isocitrate from oxaloacetate: step 1/2.</text>
</comment>
<comment type="developmental stage">
    <text evidence="5">Expressed in the mother cell at intermediate stages of sporulation under the control of the sigma-E factor.</text>
</comment>
<comment type="induction">
    <text evidence="5">Subject to catabolite repression.</text>
</comment>
<comment type="miscellaneous">
    <text evidence="9">Bifunctionality as a citrate and 2-methylcitrate synthase is likely important in the mother cell's physiological milieu.</text>
</comment>
<comment type="similarity">
    <text evidence="8">Belongs to the citrate synthase family.</text>
</comment>
<reference key="1">
    <citation type="journal article" date="1996" name="J. Bacteriol.">
        <title>A sigma E dependent operon subject to catabolite repression during sporulation in Bacillus subtilis.</title>
        <authorList>
            <person name="Bryan E.M."/>
            <person name="Beall B.W."/>
            <person name="Moran C.P. Jr."/>
        </authorList>
    </citation>
    <scope>NUCLEOTIDE SEQUENCE [GENOMIC DNA]</scope>
    <scope>FUNCTION AS A CITRATE SYNTHASE</scope>
    <scope>DEVELOPMENTAL STAGE</scope>
    <scope>INDUCTION</scope>
    <source>
        <strain>168 / MB24</strain>
    </source>
</reference>
<reference key="2">
    <citation type="journal article" date="1996" name="Microbiology">
        <title>Systematic sequencing of the 283 kb 210 degrees-232 degrees region of the Bacillus subtilis genome containing the skin element and many sporulation genes.</title>
        <authorList>
            <person name="Mizuno M."/>
            <person name="Masuda S."/>
            <person name="Takemaru K."/>
            <person name="Hosono S."/>
            <person name="Sato T."/>
            <person name="Takeuchi M."/>
            <person name="Kobayashi Y."/>
        </authorList>
    </citation>
    <scope>NUCLEOTIDE SEQUENCE [GENOMIC DNA]</scope>
    <source>
        <strain>168 / JH642</strain>
    </source>
</reference>
<reference key="3">
    <citation type="journal article" date="1997" name="Nature">
        <title>The complete genome sequence of the Gram-positive bacterium Bacillus subtilis.</title>
        <authorList>
            <person name="Kunst F."/>
            <person name="Ogasawara N."/>
            <person name="Moszer I."/>
            <person name="Albertini A.M."/>
            <person name="Alloni G."/>
            <person name="Azevedo V."/>
            <person name="Bertero M.G."/>
            <person name="Bessieres P."/>
            <person name="Bolotin A."/>
            <person name="Borchert S."/>
            <person name="Borriss R."/>
            <person name="Boursier L."/>
            <person name="Brans A."/>
            <person name="Braun M."/>
            <person name="Brignell S.C."/>
            <person name="Bron S."/>
            <person name="Brouillet S."/>
            <person name="Bruschi C.V."/>
            <person name="Caldwell B."/>
            <person name="Capuano V."/>
            <person name="Carter N.M."/>
            <person name="Choi S.-K."/>
            <person name="Codani J.-J."/>
            <person name="Connerton I.F."/>
            <person name="Cummings N.J."/>
            <person name="Daniel R.A."/>
            <person name="Denizot F."/>
            <person name="Devine K.M."/>
            <person name="Duesterhoeft A."/>
            <person name="Ehrlich S.D."/>
            <person name="Emmerson P.T."/>
            <person name="Entian K.-D."/>
            <person name="Errington J."/>
            <person name="Fabret C."/>
            <person name="Ferrari E."/>
            <person name="Foulger D."/>
            <person name="Fritz C."/>
            <person name="Fujita M."/>
            <person name="Fujita Y."/>
            <person name="Fuma S."/>
            <person name="Galizzi A."/>
            <person name="Galleron N."/>
            <person name="Ghim S.-Y."/>
            <person name="Glaser P."/>
            <person name="Goffeau A."/>
            <person name="Golightly E.J."/>
            <person name="Grandi G."/>
            <person name="Guiseppi G."/>
            <person name="Guy B.J."/>
            <person name="Haga K."/>
            <person name="Haiech J."/>
            <person name="Harwood C.R."/>
            <person name="Henaut A."/>
            <person name="Hilbert H."/>
            <person name="Holsappel S."/>
            <person name="Hosono S."/>
            <person name="Hullo M.-F."/>
            <person name="Itaya M."/>
            <person name="Jones L.-M."/>
            <person name="Joris B."/>
            <person name="Karamata D."/>
            <person name="Kasahara Y."/>
            <person name="Klaerr-Blanchard M."/>
            <person name="Klein C."/>
            <person name="Kobayashi Y."/>
            <person name="Koetter P."/>
            <person name="Koningstein G."/>
            <person name="Krogh S."/>
            <person name="Kumano M."/>
            <person name="Kurita K."/>
            <person name="Lapidus A."/>
            <person name="Lardinois S."/>
            <person name="Lauber J."/>
            <person name="Lazarevic V."/>
            <person name="Lee S.-M."/>
            <person name="Levine A."/>
            <person name="Liu H."/>
            <person name="Masuda S."/>
            <person name="Mauel C."/>
            <person name="Medigue C."/>
            <person name="Medina N."/>
            <person name="Mellado R.P."/>
            <person name="Mizuno M."/>
            <person name="Moestl D."/>
            <person name="Nakai S."/>
            <person name="Noback M."/>
            <person name="Noone D."/>
            <person name="O'Reilly M."/>
            <person name="Ogawa K."/>
            <person name="Ogiwara A."/>
            <person name="Oudega B."/>
            <person name="Park S.-H."/>
            <person name="Parro V."/>
            <person name="Pohl T.M."/>
            <person name="Portetelle D."/>
            <person name="Porwollik S."/>
            <person name="Prescott A.M."/>
            <person name="Presecan E."/>
            <person name="Pujic P."/>
            <person name="Purnelle B."/>
            <person name="Rapoport G."/>
            <person name="Rey M."/>
            <person name="Reynolds S."/>
            <person name="Rieger M."/>
            <person name="Rivolta C."/>
            <person name="Rocha E."/>
            <person name="Roche B."/>
            <person name="Rose M."/>
            <person name="Sadaie Y."/>
            <person name="Sato T."/>
            <person name="Scanlan E."/>
            <person name="Schleich S."/>
            <person name="Schroeter R."/>
            <person name="Scoffone F."/>
            <person name="Sekiguchi J."/>
            <person name="Sekowska A."/>
            <person name="Seror S.J."/>
            <person name="Serror P."/>
            <person name="Shin B.-S."/>
            <person name="Soldo B."/>
            <person name="Sorokin A."/>
            <person name="Tacconi E."/>
            <person name="Takagi T."/>
            <person name="Takahashi H."/>
            <person name="Takemaru K."/>
            <person name="Takeuchi M."/>
            <person name="Tamakoshi A."/>
            <person name="Tanaka T."/>
            <person name="Terpstra P."/>
            <person name="Tognoni A."/>
            <person name="Tosato V."/>
            <person name="Uchiyama S."/>
            <person name="Vandenbol M."/>
            <person name="Vannier F."/>
            <person name="Vassarotti A."/>
            <person name="Viari A."/>
            <person name="Wambutt R."/>
            <person name="Wedler E."/>
            <person name="Wedler H."/>
            <person name="Weitzenegger T."/>
            <person name="Winters P."/>
            <person name="Wipat A."/>
            <person name="Yamamoto H."/>
            <person name="Yamane K."/>
            <person name="Yasumoto K."/>
            <person name="Yata K."/>
            <person name="Yoshida K."/>
            <person name="Yoshikawa H.-F."/>
            <person name="Zumstein E."/>
            <person name="Yoshikawa H."/>
            <person name="Danchin A."/>
        </authorList>
    </citation>
    <scope>NUCLEOTIDE SEQUENCE [LARGE SCALE GENOMIC DNA]</scope>
    <source>
        <strain>168</strain>
    </source>
</reference>
<reference key="4">
    <citation type="journal article" date="2017" name="Biochemistry">
        <title>First biochemical characterization of a methylcitric acid cycle from Bacillus subtilis strain 168.</title>
        <authorList>
            <person name="Reddick J.J."/>
            <person name="Sirkisoon S."/>
            <person name="Dahal R.A."/>
            <person name="Hardesty G."/>
            <person name="Hage N.E."/>
            <person name="Booth W.T."/>
            <person name="Quattlebaum A.L."/>
            <person name="Mills S.N."/>
            <person name="Meadows V.G."/>
            <person name="Adams S.L.H."/>
            <person name="Doyle J.S."/>
            <person name="Kiel B.E."/>
        </authorList>
    </citation>
    <scope>FUNCTION</scope>
    <scope>CATALYTIC ACTIVITY</scope>
    <scope>PATHWAY</scope>
    <source>
        <strain>168</strain>
    </source>
</reference>
<gene>
    <name evidence="7" type="primary">mmgD</name>
    <name type="synonym">yqiO</name>
    <name type="ordered locus">BSU24140</name>
</gene>
<accession>P45858</accession>
<proteinExistence type="evidence at protein level"/>
<feature type="chain" id="PRO_0000169930" description="Citrate/2-methylcitrate synthase">
    <location>
        <begin position="1"/>
        <end position="372"/>
    </location>
</feature>
<feature type="active site" evidence="2">
    <location>
        <position position="223"/>
    </location>
</feature>
<feature type="active site" evidence="2">
    <location>
        <position position="262"/>
    </location>
</feature>
<feature type="active site" evidence="2">
    <location>
        <position position="314"/>
    </location>
</feature>
<feature type="binding site" evidence="1">
    <location>
        <position position="188"/>
    </location>
    <ligand>
        <name>substrate</name>
    </ligand>
</feature>
<feature type="binding site" evidence="2">
    <location>
        <begin position="256"/>
        <end position="260"/>
    </location>
    <ligand>
        <name>CoA</name>
        <dbReference type="ChEBI" id="CHEBI:57287"/>
    </ligand>
</feature>
<feature type="binding site" evidence="1">
    <location>
        <position position="272"/>
    </location>
    <ligand>
        <name>substrate</name>
    </ligand>
</feature>
<feature type="binding site" evidence="1">
    <location>
        <position position="339"/>
    </location>
    <ligand>
        <name>substrate</name>
    </ligand>
</feature>
<feature type="binding site" evidence="1">
    <location>
        <position position="358"/>
    </location>
    <ligand>
        <name>substrate</name>
    </ligand>
</feature>
<evidence type="ECO:0000250" key="1">
    <source>
        <dbReference type="UniProtKB" id="I6Y9Q3"/>
    </source>
</evidence>
<evidence type="ECO:0000250" key="2">
    <source>
        <dbReference type="UniProtKB" id="O34002"/>
    </source>
</evidence>
<evidence type="ECO:0000250" key="3">
    <source>
        <dbReference type="UniProtKB" id="Q8NSL1"/>
    </source>
</evidence>
<evidence type="ECO:0000269" key="4">
    <source>
    </source>
</evidence>
<evidence type="ECO:0000269" key="5">
    <source>
    </source>
</evidence>
<evidence type="ECO:0000303" key="6">
    <source>
    </source>
</evidence>
<evidence type="ECO:0000303" key="7">
    <source>
    </source>
</evidence>
<evidence type="ECO:0000305" key="8"/>
<evidence type="ECO:0000305" key="9">
    <source>
    </source>
</evidence>
<sequence>MEEKQHYSPGLDGVIAAETHISYLDTQSSQILIRGYDLIELSETKSYLELVHLLLEGRLPEESEMETLERKINSASSLPADHLRLLELLPEDTHPMDGLRTGLSALAGYDRQIDDRSPSANKERAYQLLGKMPALTAASYRIINKKEPILPLQTLSYSANFLYMMTGKLPSSLEEQIFDRSLVLYSEHEMPNSTFAARVIASTHSDLYGALTGAVASLKGNLHGGANEAVMYLLLEAKTTSDFEQLLQTKLKRKEKIMGFGHRVYMKKMDPRALMMKEALQQLCDKAGDHRLYEMCEAGERLMEKEKGLYPNLDYYAAPVYWMLGIPIPLYTPIFFSARTSGLCAHVIEQHANNRLFRPRVSYMGPRYQTKS</sequence>
<protein>
    <recommendedName>
        <fullName evidence="6">Citrate/2-methylcitrate synthase</fullName>
        <ecNumber evidence="4">2.3.3.-</ecNumber>
        <ecNumber evidence="4">2.3.3.16</ecNumber>
    </recommendedName>
    <alternativeName>
        <fullName evidence="3">2-methylcitrate synthase</fullName>
        <shortName evidence="3">2-MCS</shortName>
        <shortName evidence="3">MCS</shortName>
    </alternativeName>
    <alternativeName>
        <fullName evidence="7">Citrate synthase</fullName>
    </alternativeName>
</protein>
<organism>
    <name type="scientific">Bacillus subtilis (strain 168)</name>
    <dbReference type="NCBI Taxonomy" id="224308"/>
    <lineage>
        <taxon>Bacteria</taxon>
        <taxon>Bacillati</taxon>
        <taxon>Bacillota</taxon>
        <taxon>Bacilli</taxon>
        <taxon>Bacillales</taxon>
        <taxon>Bacillaceae</taxon>
        <taxon>Bacillus</taxon>
    </lineage>
</organism>
<name>MMGD_BACSU</name>
<keyword id="KW-1185">Reference proteome</keyword>
<keyword id="KW-0749">Sporulation</keyword>
<keyword id="KW-0808">Transferase</keyword>
<keyword id="KW-0816">Tricarboxylic acid cycle</keyword>
<dbReference type="EC" id="2.3.3.-" evidence="4"/>
<dbReference type="EC" id="2.3.3.16" evidence="4"/>
<dbReference type="EMBL" id="U29084">
    <property type="protein sequence ID" value="AAB09616.1"/>
    <property type="molecule type" value="Genomic_DNA"/>
</dbReference>
<dbReference type="EMBL" id="D84432">
    <property type="protein sequence ID" value="BAA12590.1"/>
    <property type="molecule type" value="Genomic_DNA"/>
</dbReference>
<dbReference type="EMBL" id="AL009126">
    <property type="protein sequence ID" value="CAB14345.1"/>
    <property type="molecule type" value="Genomic_DNA"/>
</dbReference>
<dbReference type="PIR" id="E69658">
    <property type="entry name" value="E69658"/>
</dbReference>
<dbReference type="RefSeq" id="NP_390294.1">
    <property type="nucleotide sequence ID" value="NC_000964.3"/>
</dbReference>
<dbReference type="RefSeq" id="WP_003230298.1">
    <property type="nucleotide sequence ID" value="NZ_OZ025638.1"/>
</dbReference>
<dbReference type="SMR" id="P45858"/>
<dbReference type="FunCoup" id="P45858">
    <property type="interactions" value="507"/>
</dbReference>
<dbReference type="STRING" id="224308.BSU24140"/>
<dbReference type="PaxDb" id="224308-BSU24140"/>
<dbReference type="EnsemblBacteria" id="CAB14345">
    <property type="protein sequence ID" value="CAB14345"/>
    <property type="gene ID" value="BSU_24140"/>
</dbReference>
<dbReference type="GeneID" id="938665"/>
<dbReference type="KEGG" id="bsu:BSU24140"/>
<dbReference type="PATRIC" id="fig|224308.179.peg.2628"/>
<dbReference type="eggNOG" id="COG0372">
    <property type="taxonomic scope" value="Bacteria"/>
</dbReference>
<dbReference type="InParanoid" id="P45858"/>
<dbReference type="OrthoDB" id="9800864at2"/>
<dbReference type="PhylomeDB" id="P45858"/>
<dbReference type="BioCyc" id="BSUB:BSU24140-MONOMER"/>
<dbReference type="BRENDA" id="2.3.3.16">
    <property type="organism ID" value="658"/>
</dbReference>
<dbReference type="BRENDA" id="2.3.3.5">
    <property type="organism ID" value="658"/>
</dbReference>
<dbReference type="UniPathway" id="UPA00223">
    <property type="reaction ID" value="UER00717"/>
</dbReference>
<dbReference type="Proteomes" id="UP000001570">
    <property type="component" value="Chromosome"/>
</dbReference>
<dbReference type="GO" id="GO:0050440">
    <property type="term" value="F:2-methylcitrate synthase activity"/>
    <property type="evidence" value="ECO:0000250"/>
    <property type="project" value="UniProtKB"/>
</dbReference>
<dbReference type="GO" id="GO:0004108">
    <property type="term" value="F:citrate (Si)-synthase activity"/>
    <property type="evidence" value="ECO:0000318"/>
    <property type="project" value="GO_Central"/>
</dbReference>
<dbReference type="GO" id="GO:0036440">
    <property type="term" value="F:citrate synthase activity"/>
    <property type="evidence" value="ECO:0000250"/>
    <property type="project" value="UniProtKB"/>
</dbReference>
<dbReference type="GO" id="GO:0005975">
    <property type="term" value="P:carbohydrate metabolic process"/>
    <property type="evidence" value="ECO:0000318"/>
    <property type="project" value="GO_Central"/>
</dbReference>
<dbReference type="GO" id="GO:0019679">
    <property type="term" value="P:propionate metabolic process, methylcitrate cycle"/>
    <property type="evidence" value="ECO:0000250"/>
    <property type="project" value="UniProtKB"/>
</dbReference>
<dbReference type="GO" id="GO:0030435">
    <property type="term" value="P:sporulation resulting in formation of a cellular spore"/>
    <property type="evidence" value="ECO:0007669"/>
    <property type="project" value="UniProtKB-KW"/>
</dbReference>
<dbReference type="GO" id="GO:0006099">
    <property type="term" value="P:tricarboxylic acid cycle"/>
    <property type="evidence" value="ECO:0000318"/>
    <property type="project" value="GO_Central"/>
</dbReference>
<dbReference type="CDD" id="cd06118">
    <property type="entry name" value="citrate_synt_like_1"/>
    <property type="match status" value="1"/>
</dbReference>
<dbReference type="FunFam" id="1.10.230.10:FF:000003">
    <property type="entry name" value="Citrate synthase"/>
    <property type="match status" value="1"/>
</dbReference>
<dbReference type="Gene3D" id="1.10.580.10">
    <property type="entry name" value="Citrate Synthase, domain 1"/>
    <property type="match status" value="1"/>
</dbReference>
<dbReference type="Gene3D" id="1.10.230.10">
    <property type="entry name" value="Cytochrome P450-Terp, domain 2"/>
    <property type="match status" value="1"/>
</dbReference>
<dbReference type="InterPro" id="IPR016142">
    <property type="entry name" value="Citrate_synth-like_lrg_a-sub"/>
</dbReference>
<dbReference type="InterPro" id="IPR016143">
    <property type="entry name" value="Citrate_synth-like_sm_a-sub"/>
</dbReference>
<dbReference type="InterPro" id="IPR002020">
    <property type="entry name" value="Citrate_synthase"/>
</dbReference>
<dbReference type="InterPro" id="IPR019810">
    <property type="entry name" value="Citrate_synthase_AS"/>
</dbReference>
<dbReference type="InterPro" id="IPR024176">
    <property type="entry name" value="Citrate_synthase_bac-typ"/>
</dbReference>
<dbReference type="InterPro" id="IPR036969">
    <property type="entry name" value="Citrate_synthase_sf"/>
</dbReference>
<dbReference type="NCBIfam" id="NF009004">
    <property type="entry name" value="PRK12349.1"/>
    <property type="match status" value="1"/>
</dbReference>
<dbReference type="PANTHER" id="PTHR11739">
    <property type="entry name" value="CITRATE SYNTHASE"/>
    <property type="match status" value="1"/>
</dbReference>
<dbReference type="PANTHER" id="PTHR11739:SF11">
    <property type="entry name" value="CITRATE_2-METHYLCITRATE SYNTHASE"/>
    <property type="match status" value="1"/>
</dbReference>
<dbReference type="Pfam" id="PF00285">
    <property type="entry name" value="Citrate_synt"/>
    <property type="match status" value="1"/>
</dbReference>
<dbReference type="PIRSF" id="PIRSF001369">
    <property type="entry name" value="Citrate_synth"/>
    <property type="match status" value="1"/>
</dbReference>
<dbReference type="PRINTS" id="PR00143">
    <property type="entry name" value="CITRTSNTHASE"/>
</dbReference>
<dbReference type="SUPFAM" id="SSF48256">
    <property type="entry name" value="Citrate synthase"/>
    <property type="match status" value="1"/>
</dbReference>
<dbReference type="PROSITE" id="PS00480">
    <property type="entry name" value="CITRATE_SYNTHASE"/>
    <property type="match status" value="1"/>
</dbReference>